<accession>P46525</accession>
<gene>
    <name type="primary">CS120</name>
</gene>
<comment type="function">
    <text>May reduce intracellular freezing damage during winter by hydrogen-bonding to the lattice of the nascent ice crystals, thus modifying the structure and/or propagation of ice crystals.</text>
</comment>
<comment type="induction">
    <text>Specifically induced by cold temperatures.</text>
</comment>
<comment type="domain">
    <text>Contains 6 A-type repeats and 11 B-type repeats similar to those found in maize, rice and barley dehydrin and rab proteins.</text>
</comment>
<comment type="similarity">
    <text evidence="2">Belongs to the plant dehydrin family.</text>
</comment>
<dbReference type="EMBL" id="M93342">
    <property type="protein sequence ID" value="AAA34261.2"/>
    <property type="molecule type" value="mRNA"/>
</dbReference>
<dbReference type="PIR" id="S27766">
    <property type="entry name" value="S27766"/>
</dbReference>
<dbReference type="STRING" id="4565.P46525"/>
<dbReference type="PaxDb" id="4565-Traes_6DL_134445958.2"/>
<dbReference type="Proteomes" id="UP000019116">
    <property type="component" value="Unplaced"/>
</dbReference>
<dbReference type="ExpressionAtlas" id="P46525">
    <property type="expression patterns" value="baseline and differential"/>
</dbReference>
<dbReference type="GO" id="GO:0009631">
    <property type="term" value="P:cold acclimation"/>
    <property type="evidence" value="ECO:0000318"/>
    <property type="project" value="GO_Central"/>
</dbReference>
<dbReference type="GO" id="GO:0009737">
    <property type="term" value="P:response to abscisic acid"/>
    <property type="evidence" value="ECO:0000318"/>
    <property type="project" value="GO_Central"/>
</dbReference>
<dbReference type="GO" id="GO:0009414">
    <property type="term" value="P:response to water deprivation"/>
    <property type="evidence" value="ECO:0000318"/>
    <property type="project" value="GO_Central"/>
</dbReference>
<dbReference type="InterPro" id="IPR000167">
    <property type="entry name" value="Dehydrin"/>
</dbReference>
<dbReference type="InterPro" id="IPR030513">
    <property type="entry name" value="Dehydrin_CS"/>
</dbReference>
<dbReference type="PANTHER" id="PTHR33346:SF42">
    <property type="entry name" value="DEHYDRIN XERO 1"/>
    <property type="match status" value="1"/>
</dbReference>
<dbReference type="PANTHER" id="PTHR33346">
    <property type="entry name" value="DEHYDRIN XERO 2-RELATED"/>
    <property type="match status" value="1"/>
</dbReference>
<dbReference type="Pfam" id="PF00257">
    <property type="entry name" value="Dehydrin"/>
    <property type="match status" value="1"/>
</dbReference>
<dbReference type="PROSITE" id="PS00823">
    <property type="entry name" value="DEHYDRIN_2"/>
    <property type="match status" value="2"/>
</dbReference>
<keyword id="KW-1185">Reference proteome</keyword>
<keyword id="KW-0677">Repeat</keyword>
<name>CS120_WHEAT</name>
<feature type="chain" id="PRO_0000100063" description="Cold-shock protein CS120">
    <location>
        <begin position="1"/>
        <end position="391"/>
    </location>
</feature>
<feature type="repeat" description="1-1">
    <location>
        <begin position="9"/>
        <end position="31"/>
    </location>
</feature>
<feature type="repeat" description="2-1">
    <location>
        <begin position="49"/>
        <end position="62"/>
    </location>
</feature>
<feature type="repeat" description="1-2">
    <location>
        <begin position="72"/>
        <end position="94"/>
    </location>
</feature>
<feature type="repeat" description="2-2">
    <location>
        <begin position="95"/>
        <end position="108"/>
    </location>
</feature>
<feature type="repeat" description="2-3">
    <location>
        <begin position="115"/>
        <end position="128"/>
    </location>
</feature>
<feature type="repeat" description="2-4">
    <location>
        <begin position="135"/>
        <end position="148"/>
    </location>
</feature>
<feature type="repeat" description="1-3">
    <location>
        <begin position="156"/>
        <end position="178"/>
    </location>
</feature>
<feature type="repeat" description="2-5">
    <location>
        <begin position="179"/>
        <end position="192"/>
    </location>
</feature>
<feature type="repeat" description="2-6">
    <location>
        <begin position="199"/>
        <end position="212"/>
    </location>
</feature>
<feature type="repeat" description="1-4">
    <location>
        <begin position="220"/>
        <end position="242"/>
    </location>
</feature>
<feature type="repeat" description="2-7">
    <location>
        <begin position="243"/>
        <end position="256"/>
    </location>
</feature>
<feature type="repeat" description="2-8">
    <location>
        <begin position="263"/>
        <end position="276"/>
    </location>
</feature>
<feature type="repeat" description="1-5">
    <location>
        <begin position="284"/>
        <end position="306"/>
    </location>
</feature>
<feature type="repeat" description="2-9">
    <location>
        <begin position="307"/>
        <end position="320"/>
    </location>
</feature>
<feature type="repeat" description="2-10">
    <location>
        <begin position="327"/>
        <end position="340"/>
    </location>
</feature>
<feature type="repeat" description="2-11">
    <location>
        <begin position="350"/>
        <end position="363"/>
    </location>
</feature>
<feature type="repeat" description="1-6">
    <location>
        <begin position="374"/>
        <end position="391"/>
    </location>
</feature>
<feature type="region of interest" description="6 X 23 AA approximate repeats">
    <location>
        <begin position="9"/>
        <end position="391"/>
    </location>
</feature>
<feature type="region of interest" description="Disordered" evidence="1">
    <location>
        <begin position="21"/>
        <end position="391"/>
    </location>
</feature>
<feature type="region of interest" description="11 X 14 AA approximate repeats">
    <location>
        <begin position="49"/>
        <end position="363"/>
    </location>
</feature>
<feature type="compositionally biased region" description="Basic and acidic residues" evidence="1">
    <location>
        <begin position="21"/>
        <end position="33"/>
    </location>
</feature>
<feature type="compositionally biased region" description="Low complexity" evidence="1">
    <location>
        <begin position="34"/>
        <end position="59"/>
    </location>
</feature>
<feature type="compositionally biased region" description="Basic and acidic residues" evidence="1">
    <location>
        <begin position="70"/>
        <end position="92"/>
    </location>
</feature>
<feature type="compositionally biased region" description="Low complexity" evidence="1">
    <location>
        <begin position="93"/>
        <end position="145"/>
    </location>
</feature>
<feature type="compositionally biased region" description="Basic and acidic residues" evidence="1">
    <location>
        <begin position="155"/>
        <end position="176"/>
    </location>
</feature>
<feature type="compositionally biased region" description="Low complexity" evidence="1">
    <location>
        <begin position="177"/>
        <end position="196"/>
    </location>
</feature>
<feature type="compositionally biased region" description="Basic and acidic residues" evidence="1">
    <location>
        <begin position="219"/>
        <end position="240"/>
    </location>
</feature>
<feature type="compositionally biased region" description="Low complexity" evidence="1">
    <location>
        <begin position="241"/>
        <end position="260"/>
    </location>
</feature>
<feature type="compositionally biased region" description="Low complexity" evidence="1">
    <location>
        <begin position="272"/>
        <end position="282"/>
    </location>
</feature>
<feature type="compositionally biased region" description="Basic and acidic residues" evidence="1">
    <location>
        <begin position="283"/>
        <end position="304"/>
    </location>
</feature>
<feature type="compositionally biased region" description="Low complexity" evidence="1">
    <location>
        <begin position="305"/>
        <end position="324"/>
    </location>
</feature>
<feature type="compositionally biased region" description="Low complexity" evidence="1">
    <location>
        <begin position="333"/>
        <end position="351"/>
    </location>
</feature>
<feature type="compositionally biased region" description="Gly residues" evidence="1">
    <location>
        <begin position="361"/>
        <end position="372"/>
    </location>
</feature>
<feature type="compositionally biased region" description="Basic and acidic residues" evidence="1">
    <location>
        <begin position="373"/>
        <end position="391"/>
    </location>
</feature>
<reference key="1">
    <citation type="journal article" date="1992" name="Plant Physiol.">
        <title>Cloning, characterization and expression of a cDNA encoding a 50-kiladalton protein specifically induced by cold acclimation in wheat.</title>
        <authorList>
            <person name="Houde M."/>
            <person name="Danyluk J."/>
            <person name="Laliberte J.-F."/>
            <person name="Rassart E."/>
            <person name="Dhindsa R.S."/>
            <person name="Sarhan F."/>
        </authorList>
    </citation>
    <scope>NUCLEOTIDE SEQUENCE [MRNA]</scope>
    <source>
        <strain>cv. Norstar</strain>
        <tissue>Shoot</tissue>
    </source>
</reference>
<reference key="2">
    <citation type="submission" date="2003-06" db="EMBL/GenBank/DDBJ databases">
        <authorList>
            <person name="Houde M."/>
            <person name="Danyluk J."/>
            <person name="Laliberte J.-F."/>
            <person name="Rassart E."/>
            <person name="Dhindsa R.S."/>
            <person name="Sarhan F."/>
        </authorList>
    </citation>
    <scope>SEQUENCE REVISION TO 320-328</scope>
</reference>
<sequence length="391" mass="38898">MENQAHIAGEKKGIMEKIKEKLPGGHGDHKETAGTHGHPGTATHGAPATGGAYGQQGHAGTTGTGLHGAHAGEKKGVMENIKDKLPGGHQDHQQTGGTYGQQGHTGTATHGTPATGGTYGQQGHTGTATHGTPATGGTYGEQGHTGVTGTGTHGTGEKKGVMENIKEKLPGGHGDHQQTGGTYGQQGHTGTATHGTPAGGGTYEQHGHTGMTGTGTHGTGEKKGVMENIKDKLPGGHGDHQQTGGTYGQQGHTGTATQGTPAGGGTYEQHGHTGMTGAGTHSTGEKKGVMENIKEKLPGGHSDHQQTGGAYGQQGHTGTATHGTPAGGGTYGQHGHAGVIGTETHGTTATGGTHGQHGHTGTTGTGTHGSDGIGEKKSLMDKIKDKLPGQH</sequence>
<evidence type="ECO:0000256" key="1">
    <source>
        <dbReference type="SAM" id="MobiDB-lite"/>
    </source>
</evidence>
<evidence type="ECO:0000305" key="2"/>
<proteinExistence type="evidence at transcript level"/>
<organism>
    <name type="scientific">Triticum aestivum</name>
    <name type="common">Wheat</name>
    <dbReference type="NCBI Taxonomy" id="4565"/>
    <lineage>
        <taxon>Eukaryota</taxon>
        <taxon>Viridiplantae</taxon>
        <taxon>Streptophyta</taxon>
        <taxon>Embryophyta</taxon>
        <taxon>Tracheophyta</taxon>
        <taxon>Spermatophyta</taxon>
        <taxon>Magnoliopsida</taxon>
        <taxon>Liliopsida</taxon>
        <taxon>Poales</taxon>
        <taxon>Poaceae</taxon>
        <taxon>BOP clade</taxon>
        <taxon>Pooideae</taxon>
        <taxon>Triticodae</taxon>
        <taxon>Triticeae</taxon>
        <taxon>Triticinae</taxon>
        <taxon>Triticum</taxon>
    </lineage>
</organism>
<protein>
    <recommendedName>
        <fullName>Cold-shock protein CS120</fullName>
    </recommendedName>
</protein>